<evidence type="ECO:0000255" key="1"/>
<evidence type="ECO:0000305" key="2"/>
<keyword id="KW-1003">Cell membrane</keyword>
<keyword id="KW-0472">Membrane</keyword>
<keyword id="KW-1185">Reference proteome</keyword>
<keyword id="KW-0812">Transmembrane</keyword>
<keyword id="KW-1133">Transmembrane helix</keyword>
<keyword id="KW-0813">Transport</keyword>
<sequence length="962" mass="104613">MVPGEVHMSDTPSGPHPIIPRTIRLAAIPILLCWLGFTVFVSVAVPPLEAIGETRAVAVAPDDAQSMRAMRRAGKVFNEFDSNSIAMVVLESDQPLGEKAHRYYDHLVDTLVLDQSHIQHIQDFWRDPLTAAGAVSADGKAAYVQLYLAGNMGEALANESVEAVRKIVANSTPPEGIRTYVTGPAALFADQIAAGDRSMKLITGLTFAVITVLLLLVYRSIATTLLILPMVFIGLGATRGTIAFLGYHGMVGLSTFVVNILTALAIAAGTDYAIFLVGRYQEARHIGQNREASFYTMYRGTANVILGSGLTIAGATYCLSFARLTLFHTMGPPLAIGMLVSVAAALTLAPAIIAIAGRFGLLDPKRRLKTRGWRRVGTAVVRWPGPILATSVALALVGLLALPGYRPGYNDRYYLRAGTPVNRGYAAADRHFGPARMNPEMLLVESDQDMRNPAGMLVIDKIAKEVLHVSGVERVQAITRPQGVPLEHASIPFQISMMGATQTMSLPYMRERMADMLTMSDEMLVAINSMEQMLDLVQQLNDVTHEMAATTREIKATTSELRDHLADIDDFVRPLRSYFYWEHHCFDIPLCSATRSLFDTLDGVDTLTDQLRALTDDMNKMEALTPQFLALLPPMITTMKTMRTMMLTMRSTISGVQDQMADMQDHATAMGQAFDTAKSGDSFYLPPEAFDNAEFQQGMKLFLSPNGKAVRFVISHESDPASTEGIDRIEAIRAATKDAIKATPLQGAKIYIGGTAATYQDIRDGTKYDILIVGIAAVCLVFIVMLMITQSLIASLVIVGTVLLSLGTAFGLSVLIWQHFVGLQVHWTIVAMSVIVLLAVGSDYNLLLVSRFKEEVGAGLKTGIIRAMAGTGAVVTSAGLVFAFTMASMAVSELRVIGQVGTTIGLGLLFDTLVVRSFMTPSIAALLGRWFWWPNMIHSRPTVPEAHTRQGARRIQPHLHRG</sequence>
<name>MMPL9_MYCTU</name>
<organism>
    <name type="scientific">Mycobacterium tuberculosis (strain ATCC 25618 / H37Rv)</name>
    <dbReference type="NCBI Taxonomy" id="83332"/>
    <lineage>
        <taxon>Bacteria</taxon>
        <taxon>Bacillati</taxon>
        <taxon>Actinomycetota</taxon>
        <taxon>Actinomycetes</taxon>
        <taxon>Mycobacteriales</taxon>
        <taxon>Mycobacteriaceae</taxon>
        <taxon>Mycobacterium</taxon>
        <taxon>Mycobacterium tuberculosis complex</taxon>
    </lineage>
</organism>
<accession>P9WJU3</accession>
<accession>L0TC13</accession>
<accession>P95235</accession>
<protein>
    <recommendedName>
        <fullName evidence="2">Probable transport protein MmpL9</fullName>
    </recommendedName>
</protein>
<proteinExistence type="evidence at protein level"/>
<dbReference type="EMBL" id="AL123456">
    <property type="protein sequence ID" value="CCP45127.1"/>
    <property type="molecule type" value="Genomic_DNA"/>
</dbReference>
<dbReference type="PIR" id="D70661">
    <property type="entry name" value="D70661"/>
</dbReference>
<dbReference type="RefSeq" id="NP_216855.1">
    <property type="nucleotide sequence ID" value="NC_000962.3"/>
</dbReference>
<dbReference type="RefSeq" id="WP_003899278.1">
    <property type="nucleotide sequence ID" value="NZ_NVQJ01000012.1"/>
</dbReference>
<dbReference type="SMR" id="P9WJU3"/>
<dbReference type="STRING" id="83332.Rv2339"/>
<dbReference type="PaxDb" id="83332-Rv2339"/>
<dbReference type="DNASU" id="888966"/>
<dbReference type="GeneID" id="888966"/>
<dbReference type="KEGG" id="mtu:Rv2339"/>
<dbReference type="KEGG" id="mtv:RVBD_2339"/>
<dbReference type="TubercuList" id="Rv2339"/>
<dbReference type="eggNOG" id="COG2409">
    <property type="taxonomic scope" value="Bacteria"/>
</dbReference>
<dbReference type="InParanoid" id="P9WJU3"/>
<dbReference type="OrthoDB" id="4758917at2"/>
<dbReference type="PhylomeDB" id="P9WJU3"/>
<dbReference type="Proteomes" id="UP000001584">
    <property type="component" value="Chromosome"/>
</dbReference>
<dbReference type="GO" id="GO:0005576">
    <property type="term" value="C:extracellular region"/>
    <property type="evidence" value="ECO:0007005"/>
    <property type="project" value="MTBBASE"/>
</dbReference>
<dbReference type="GO" id="GO:0009274">
    <property type="term" value="C:peptidoglycan-based cell wall"/>
    <property type="evidence" value="ECO:0007005"/>
    <property type="project" value="MTBBASE"/>
</dbReference>
<dbReference type="GO" id="GO:0005886">
    <property type="term" value="C:plasma membrane"/>
    <property type="evidence" value="ECO:0007669"/>
    <property type="project" value="UniProtKB-SubCell"/>
</dbReference>
<dbReference type="GO" id="GO:0042783">
    <property type="term" value="P:symbiont-mediated evasion of host immune response"/>
    <property type="evidence" value="ECO:0000315"/>
    <property type="project" value="MTBBASE"/>
</dbReference>
<dbReference type="FunFam" id="1.20.1640.10:FF:000018">
    <property type="entry name" value="Transmembrane transport protein MmpL10"/>
    <property type="match status" value="1"/>
</dbReference>
<dbReference type="FunFam" id="1.20.1640.10:FF:000020">
    <property type="entry name" value="Transmembrane transport protein MmpL10"/>
    <property type="match status" value="1"/>
</dbReference>
<dbReference type="Gene3D" id="1.20.1640.10">
    <property type="entry name" value="Multidrug efflux transporter AcrB transmembrane domain"/>
    <property type="match status" value="2"/>
</dbReference>
<dbReference type="InterPro" id="IPR004869">
    <property type="entry name" value="MMPL_dom"/>
</dbReference>
<dbReference type="InterPro" id="IPR004707">
    <property type="entry name" value="MmpL_fam"/>
</dbReference>
<dbReference type="InterPro" id="IPR050545">
    <property type="entry name" value="Mycobact_MmpL"/>
</dbReference>
<dbReference type="NCBIfam" id="TIGR00833">
    <property type="entry name" value="actII"/>
    <property type="match status" value="1"/>
</dbReference>
<dbReference type="PANTHER" id="PTHR33406">
    <property type="entry name" value="MEMBRANE PROTEIN MJ1562-RELATED"/>
    <property type="match status" value="1"/>
</dbReference>
<dbReference type="PANTHER" id="PTHR33406:SF6">
    <property type="entry name" value="MEMBRANE PROTEIN YDGH-RELATED"/>
    <property type="match status" value="1"/>
</dbReference>
<dbReference type="Pfam" id="PF03176">
    <property type="entry name" value="MMPL"/>
    <property type="match status" value="2"/>
</dbReference>
<dbReference type="SUPFAM" id="SSF82866">
    <property type="entry name" value="Multidrug efflux transporter AcrB transmembrane domain"/>
    <property type="match status" value="2"/>
</dbReference>
<comment type="subcellular location">
    <subcellularLocation>
        <location evidence="2">Cell membrane</location>
        <topology evidence="1">Multi-pass membrane protein</topology>
    </subcellularLocation>
</comment>
<comment type="similarity">
    <text evidence="2">Belongs to the resistance-nodulation-cell division (RND) (TC 2.A.6) family. MmpL subfamily.</text>
</comment>
<reference key="1">
    <citation type="journal article" date="1998" name="Nature">
        <title>Deciphering the biology of Mycobacterium tuberculosis from the complete genome sequence.</title>
        <authorList>
            <person name="Cole S.T."/>
            <person name="Brosch R."/>
            <person name="Parkhill J."/>
            <person name="Garnier T."/>
            <person name="Churcher C.M."/>
            <person name="Harris D.E."/>
            <person name="Gordon S.V."/>
            <person name="Eiglmeier K."/>
            <person name="Gas S."/>
            <person name="Barry C.E. III"/>
            <person name="Tekaia F."/>
            <person name="Badcock K."/>
            <person name="Basham D."/>
            <person name="Brown D."/>
            <person name="Chillingworth T."/>
            <person name="Connor R."/>
            <person name="Davies R.M."/>
            <person name="Devlin K."/>
            <person name="Feltwell T."/>
            <person name="Gentles S."/>
            <person name="Hamlin N."/>
            <person name="Holroyd S."/>
            <person name="Hornsby T."/>
            <person name="Jagels K."/>
            <person name="Krogh A."/>
            <person name="McLean J."/>
            <person name="Moule S."/>
            <person name="Murphy L.D."/>
            <person name="Oliver S."/>
            <person name="Osborne J."/>
            <person name="Quail M.A."/>
            <person name="Rajandream M.A."/>
            <person name="Rogers J."/>
            <person name="Rutter S."/>
            <person name="Seeger K."/>
            <person name="Skelton S."/>
            <person name="Squares S."/>
            <person name="Squares R."/>
            <person name="Sulston J.E."/>
            <person name="Taylor K."/>
            <person name="Whitehead S."/>
            <person name="Barrell B.G."/>
        </authorList>
    </citation>
    <scope>NUCLEOTIDE SEQUENCE [LARGE SCALE GENOMIC DNA]</scope>
    <source>
        <strain>ATCC 25618 / H37Rv</strain>
    </source>
</reference>
<reference key="2">
    <citation type="journal article" date="2011" name="Mol. Cell. Proteomics">
        <title>Proteogenomic analysis of Mycobacterium tuberculosis by high resolution mass spectrometry.</title>
        <authorList>
            <person name="Kelkar D.S."/>
            <person name="Kumar D."/>
            <person name="Kumar P."/>
            <person name="Balakrishnan L."/>
            <person name="Muthusamy B."/>
            <person name="Yadav A.K."/>
            <person name="Shrivastava P."/>
            <person name="Marimuthu A."/>
            <person name="Anand S."/>
            <person name="Sundaram H."/>
            <person name="Kingsbury R."/>
            <person name="Harsha H.C."/>
            <person name="Nair B."/>
            <person name="Prasad T.S."/>
            <person name="Chauhan D.S."/>
            <person name="Katoch K."/>
            <person name="Katoch V.M."/>
            <person name="Kumar P."/>
            <person name="Chaerkady R."/>
            <person name="Ramachandran S."/>
            <person name="Dash D."/>
            <person name="Pandey A."/>
        </authorList>
    </citation>
    <scope>IDENTIFICATION BY MASS SPECTROMETRY [LARGE SCALE ANALYSIS]</scope>
    <source>
        <strain>ATCC 25618 / H37Rv</strain>
    </source>
</reference>
<feature type="chain" id="PRO_0000103573" description="Probable transport protein MmpL9">
    <location>
        <begin position="1"/>
        <end position="962"/>
    </location>
</feature>
<feature type="transmembrane region" description="Helical" evidence="1">
    <location>
        <begin position="25"/>
        <end position="45"/>
    </location>
</feature>
<feature type="transmembrane region" description="Helical" evidence="1">
    <location>
        <begin position="201"/>
        <end position="223"/>
    </location>
</feature>
<feature type="transmembrane region" description="Helical" evidence="1">
    <location>
        <begin position="225"/>
        <end position="247"/>
    </location>
</feature>
<feature type="transmembrane region" description="Helical" evidence="1">
    <location>
        <begin position="256"/>
        <end position="276"/>
    </location>
</feature>
<feature type="transmembrane region" description="Helical" evidence="1">
    <location>
        <begin position="302"/>
        <end position="322"/>
    </location>
</feature>
<feature type="transmembrane region" description="Helical" evidence="1">
    <location>
        <begin position="335"/>
        <end position="355"/>
    </location>
</feature>
<feature type="transmembrane region" description="Helical" evidence="1">
    <location>
        <begin position="383"/>
        <end position="403"/>
    </location>
</feature>
<feature type="transmembrane region" description="Helical" evidence="1">
    <location>
        <begin position="768"/>
        <end position="788"/>
    </location>
</feature>
<feature type="transmembrane region" description="Helical" evidence="1">
    <location>
        <begin position="796"/>
        <end position="816"/>
    </location>
</feature>
<feature type="transmembrane region" description="Helical" evidence="1">
    <location>
        <begin position="820"/>
        <end position="840"/>
    </location>
</feature>
<feature type="transmembrane region" description="Helical" evidence="1">
    <location>
        <begin position="867"/>
        <end position="887"/>
    </location>
</feature>
<feature type="transmembrane region" description="Helical" evidence="1">
    <location>
        <begin position="895"/>
        <end position="915"/>
    </location>
</feature>
<gene>
    <name type="primary">mmpL9</name>
    <name type="ordered locus">Rv2339</name>
    <name type="ORF">MTCY98.08</name>
</gene>